<accession>B4UEL3</accession>
<reference key="1">
    <citation type="submission" date="2008-08" db="EMBL/GenBank/DDBJ databases">
        <title>Complete sequence of Anaeromyxobacter sp. K.</title>
        <authorList>
            <consortium name="US DOE Joint Genome Institute"/>
            <person name="Lucas S."/>
            <person name="Copeland A."/>
            <person name="Lapidus A."/>
            <person name="Glavina del Rio T."/>
            <person name="Dalin E."/>
            <person name="Tice H."/>
            <person name="Bruce D."/>
            <person name="Goodwin L."/>
            <person name="Pitluck S."/>
            <person name="Saunders E."/>
            <person name="Brettin T."/>
            <person name="Detter J.C."/>
            <person name="Han C."/>
            <person name="Larimer F."/>
            <person name="Land M."/>
            <person name="Hauser L."/>
            <person name="Kyrpides N."/>
            <person name="Ovchinnikiva G."/>
            <person name="Beliaev A."/>
        </authorList>
    </citation>
    <scope>NUCLEOTIDE SEQUENCE [LARGE SCALE GENOMIC DNA]</scope>
    <source>
        <strain>K</strain>
    </source>
</reference>
<gene>
    <name evidence="1" type="primary">hisS</name>
    <name type="ordered locus">AnaeK_2357</name>
</gene>
<proteinExistence type="inferred from homology"/>
<name>SYH_ANASK</name>
<keyword id="KW-0030">Aminoacyl-tRNA synthetase</keyword>
<keyword id="KW-0067">ATP-binding</keyword>
<keyword id="KW-0963">Cytoplasm</keyword>
<keyword id="KW-0436">Ligase</keyword>
<keyword id="KW-0547">Nucleotide-binding</keyword>
<keyword id="KW-0648">Protein biosynthesis</keyword>
<feature type="chain" id="PRO_1000199111" description="Histidine--tRNA ligase">
    <location>
        <begin position="1"/>
        <end position="414"/>
    </location>
</feature>
<comment type="catalytic activity">
    <reaction evidence="1">
        <text>tRNA(His) + L-histidine + ATP = L-histidyl-tRNA(His) + AMP + diphosphate + H(+)</text>
        <dbReference type="Rhea" id="RHEA:17313"/>
        <dbReference type="Rhea" id="RHEA-COMP:9665"/>
        <dbReference type="Rhea" id="RHEA-COMP:9689"/>
        <dbReference type="ChEBI" id="CHEBI:15378"/>
        <dbReference type="ChEBI" id="CHEBI:30616"/>
        <dbReference type="ChEBI" id="CHEBI:33019"/>
        <dbReference type="ChEBI" id="CHEBI:57595"/>
        <dbReference type="ChEBI" id="CHEBI:78442"/>
        <dbReference type="ChEBI" id="CHEBI:78527"/>
        <dbReference type="ChEBI" id="CHEBI:456215"/>
        <dbReference type="EC" id="6.1.1.21"/>
    </reaction>
</comment>
<comment type="subunit">
    <text evidence="1">Homodimer.</text>
</comment>
<comment type="subcellular location">
    <subcellularLocation>
        <location evidence="1">Cytoplasm</location>
    </subcellularLocation>
</comment>
<comment type="similarity">
    <text evidence="1">Belongs to the class-II aminoacyl-tRNA synthetase family.</text>
</comment>
<protein>
    <recommendedName>
        <fullName evidence="1">Histidine--tRNA ligase</fullName>
        <ecNumber evidence="1">6.1.1.21</ecNumber>
    </recommendedName>
    <alternativeName>
        <fullName evidence="1">Histidyl-tRNA synthetase</fullName>
        <shortName evidence="1">HisRS</shortName>
    </alternativeName>
</protein>
<organism>
    <name type="scientific">Anaeromyxobacter sp. (strain K)</name>
    <dbReference type="NCBI Taxonomy" id="447217"/>
    <lineage>
        <taxon>Bacteria</taxon>
        <taxon>Pseudomonadati</taxon>
        <taxon>Myxococcota</taxon>
        <taxon>Myxococcia</taxon>
        <taxon>Myxococcales</taxon>
        <taxon>Cystobacterineae</taxon>
        <taxon>Anaeromyxobacteraceae</taxon>
        <taxon>Anaeromyxobacter</taxon>
    </lineage>
</organism>
<dbReference type="EC" id="6.1.1.21" evidence="1"/>
<dbReference type="EMBL" id="CP001131">
    <property type="protein sequence ID" value="ACG73584.1"/>
    <property type="molecule type" value="Genomic_DNA"/>
</dbReference>
<dbReference type="RefSeq" id="WP_012526374.1">
    <property type="nucleotide sequence ID" value="NC_011145.1"/>
</dbReference>
<dbReference type="SMR" id="B4UEL3"/>
<dbReference type="KEGG" id="ank:AnaeK_2357"/>
<dbReference type="HOGENOM" id="CLU_025113_1_1_7"/>
<dbReference type="OrthoDB" id="9800814at2"/>
<dbReference type="Proteomes" id="UP000001871">
    <property type="component" value="Chromosome"/>
</dbReference>
<dbReference type="GO" id="GO:0005737">
    <property type="term" value="C:cytoplasm"/>
    <property type="evidence" value="ECO:0007669"/>
    <property type="project" value="UniProtKB-SubCell"/>
</dbReference>
<dbReference type="GO" id="GO:0005524">
    <property type="term" value="F:ATP binding"/>
    <property type="evidence" value="ECO:0007669"/>
    <property type="project" value="UniProtKB-UniRule"/>
</dbReference>
<dbReference type="GO" id="GO:0004821">
    <property type="term" value="F:histidine-tRNA ligase activity"/>
    <property type="evidence" value="ECO:0007669"/>
    <property type="project" value="UniProtKB-UniRule"/>
</dbReference>
<dbReference type="GO" id="GO:0006427">
    <property type="term" value="P:histidyl-tRNA aminoacylation"/>
    <property type="evidence" value="ECO:0007669"/>
    <property type="project" value="UniProtKB-UniRule"/>
</dbReference>
<dbReference type="CDD" id="cd00773">
    <property type="entry name" value="HisRS-like_core"/>
    <property type="match status" value="1"/>
</dbReference>
<dbReference type="CDD" id="cd00859">
    <property type="entry name" value="HisRS_anticodon"/>
    <property type="match status" value="1"/>
</dbReference>
<dbReference type="Gene3D" id="3.40.50.800">
    <property type="entry name" value="Anticodon-binding domain"/>
    <property type="match status" value="1"/>
</dbReference>
<dbReference type="Gene3D" id="3.30.930.10">
    <property type="entry name" value="Bira Bifunctional Protein, Domain 2"/>
    <property type="match status" value="1"/>
</dbReference>
<dbReference type="HAMAP" id="MF_00127">
    <property type="entry name" value="His_tRNA_synth"/>
    <property type="match status" value="1"/>
</dbReference>
<dbReference type="InterPro" id="IPR006195">
    <property type="entry name" value="aa-tRNA-synth_II"/>
</dbReference>
<dbReference type="InterPro" id="IPR045864">
    <property type="entry name" value="aa-tRNA-synth_II/BPL/LPL"/>
</dbReference>
<dbReference type="InterPro" id="IPR004154">
    <property type="entry name" value="Anticodon-bd"/>
</dbReference>
<dbReference type="InterPro" id="IPR036621">
    <property type="entry name" value="Anticodon-bd_dom_sf"/>
</dbReference>
<dbReference type="InterPro" id="IPR015807">
    <property type="entry name" value="His-tRNA-ligase"/>
</dbReference>
<dbReference type="InterPro" id="IPR041715">
    <property type="entry name" value="HisRS-like_core"/>
</dbReference>
<dbReference type="InterPro" id="IPR004516">
    <property type="entry name" value="HisRS/HisZ"/>
</dbReference>
<dbReference type="InterPro" id="IPR033656">
    <property type="entry name" value="HisRS_anticodon"/>
</dbReference>
<dbReference type="NCBIfam" id="TIGR00442">
    <property type="entry name" value="hisS"/>
    <property type="match status" value="1"/>
</dbReference>
<dbReference type="PANTHER" id="PTHR43707:SF1">
    <property type="entry name" value="HISTIDINE--TRNA LIGASE, MITOCHONDRIAL-RELATED"/>
    <property type="match status" value="1"/>
</dbReference>
<dbReference type="PANTHER" id="PTHR43707">
    <property type="entry name" value="HISTIDYL-TRNA SYNTHETASE"/>
    <property type="match status" value="1"/>
</dbReference>
<dbReference type="Pfam" id="PF03129">
    <property type="entry name" value="HGTP_anticodon"/>
    <property type="match status" value="1"/>
</dbReference>
<dbReference type="Pfam" id="PF13393">
    <property type="entry name" value="tRNA-synt_His"/>
    <property type="match status" value="1"/>
</dbReference>
<dbReference type="PIRSF" id="PIRSF001549">
    <property type="entry name" value="His-tRNA_synth"/>
    <property type="match status" value="1"/>
</dbReference>
<dbReference type="SUPFAM" id="SSF52954">
    <property type="entry name" value="Class II aaRS ABD-related"/>
    <property type="match status" value="1"/>
</dbReference>
<dbReference type="SUPFAM" id="SSF55681">
    <property type="entry name" value="Class II aaRS and biotin synthetases"/>
    <property type="match status" value="1"/>
</dbReference>
<dbReference type="PROSITE" id="PS50862">
    <property type="entry name" value="AA_TRNA_LIGASE_II"/>
    <property type="match status" value="1"/>
</dbReference>
<evidence type="ECO:0000255" key="1">
    <source>
        <dbReference type="HAMAP-Rule" id="MF_00127"/>
    </source>
</evidence>
<sequence length="414" mass="45424">MKINGVKGMNDVLPADVARWHEMESVAREVFALYGYREVRTPAVEHAALFARGVGEATDIVNKEMYVFEDKGEELLALRPEGTAGTVRAFIEHGAFVEGPQKWFYMGPMFRRERPQKGRYRQFHQIGCEAFGVAEPYLDAEQIALLADYFARLGVTAELKLNSVGDAQCRPAYLADLKAYLVANQGALCADCKDRIERNPLRVLDCKVESCQPVLEQAPQLLERLCEPCRTHFDQVKAGLDALGVAYRVEPRLVRGLDYYVRTAYEFTSDALGSQSAVAGGGRYDRLVETLGGPPTPGIGFALGEERLSMILEKVGRAMPERRPAVFFVSADATGALEALRLAAGLRRAGIACELDPRGGKLKAQFKQAERVGARWAVVLGGNEVATGQAKLKDLQTREETPVALSELAARVSG</sequence>